<proteinExistence type="evidence at protein level"/>
<name>EF1A_YEAST</name>
<keyword id="KW-0002">3D-structure</keyword>
<keyword id="KW-0009">Actin-binding</keyword>
<keyword id="KW-0963">Cytoplasm</keyword>
<keyword id="KW-0206">Cytoskeleton</keyword>
<keyword id="KW-0903">Direct protein sequencing</keyword>
<keyword id="KW-0251">Elongation factor</keyword>
<keyword id="KW-0342">GTP-binding</keyword>
<keyword id="KW-1017">Isopeptide bond</keyword>
<keyword id="KW-0488">Methylation</keyword>
<keyword id="KW-0547">Nucleotide-binding</keyword>
<keyword id="KW-0597">Phosphoprotein</keyword>
<keyword id="KW-0648">Protein biosynthesis</keyword>
<keyword id="KW-1185">Reference proteome</keyword>
<keyword id="KW-0832">Ubl conjugation</keyword>
<reference key="1">
    <citation type="journal article" date="1984" name="EMBO J.">
        <title>Polypeptide chain elongation factor 1 alpha (EF-1 alpha) from yeast: nucleotide sequence of one of the two genes for EF-1 alpha from Saccharomyces cerevisiae.</title>
        <authorList>
            <person name="Nagata S."/>
            <person name="Nagashima K."/>
            <person name="Tsunetsugu-Yokota Y."/>
            <person name="Fujimura K."/>
            <person name="Miyazaki M."/>
            <person name="Kaziro Y."/>
        </authorList>
    </citation>
    <scope>NUCLEOTIDE SEQUENCE [GENOMIC DNA] (TEF1)</scope>
</reference>
<reference key="2">
    <citation type="journal article" date="1984" name="EMBO J.">
        <title>Identification of two genes coding for the translation elongation factor EF-1 alpha of S. cerevisiae.</title>
        <authorList>
            <person name="Schirmaier F."/>
            <person name="Philippsen P."/>
        </authorList>
    </citation>
    <scope>NUCLEOTIDE SEQUENCE [GENOMIC DNA] (TEF2)</scope>
</reference>
<reference key="3">
    <citation type="journal article" date="1985" name="J. Biol. Chem.">
        <title>Cloning, nucleotide sequence, and expression of one of two genes coding for yeast elongation factor 1 alpha.</title>
        <authorList>
            <person name="Cottrelle P."/>
            <person name="Thiele D."/>
            <person name="Price V.L."/>
            <person name="Memet S."/>
            <person name="Micouin J.-Y."/>
            <person name="Marck C."/>
            <person name="Buhler J.-M."/>
            <person name="Sentenac A."/>
            <person name="Fromageot P."/>
        </authorList>
    </citation>
    <scope>NUCLEOTIDE SEQUENCE [GENOMIC DNA] (TEF1)</scope>
</reference>
<reference key="4">
    <citation type="journal article" date="1986" name="Gene">
        <title>Structure of the two genes coding for polypeptide chain elongation factor 1 alpha (EF-1 alpha) from Saccharomyces cerevisiae.</title>
        <authorList>
            <person name="Nagashima K."/>
            <person name="Kasai M."/>
            <person name="Nagata S."/>
            <person name="Kaziro Y."/>
        </authorList>
    </citation>
    <scope>NUCLEOTIDE SEQUENCE [GENOMIC DNA] (TEF1 AND TEF2)</scope>
</reference>
<reference key="5">
    <citation type="journal article" date="1994" name="Yeast">
        <title>Analysis of a 70 kb region on the right arm of yeast chromosome II.</title>
        <authorList>
            <person name="Mannhaupt G."/>
            <person name="Stucka R."/>
            <person name="Ehnle S."/>
            <person name="Vetter I."/>
            <person name="Feldmann H."/>
        </authorList>
    </citation>
    <scope>NUCLEOTIDE SEQUENCE [LARGE SCALE GENOMIC DNA] (TEF2)</scope>
    <source>
        <strain>ATCC 204508 / S288c</strain>
    </source>
</reference>
<reference key="6">
    <citation type="journal article" date="1994" name="EMBO J.">
        <title>Complete DNA sequence of yeast chromosome II.</title>
        <authorList>
            <person name="Feldmann H."/>
            <person name="Aigle M."/>
            <person name="Aljinovic G."/>
            <person name="Andre B."/>
            <person name="Baclet M.C."/>
            <person name="Barthe C."/>
            <person name="Baur A."/>
            <person name="Becam A.-M."/>
            <person name="Biteau N."/>
            <person name="Boles E."/>
            <person name="Brandt T."/>
            <person name="Brendel M."/>
            <person name="Brueckner M."/>
            <person name="Bussereau F."/>
            <person name="Christiansen C."/>
            <person name="Contreras R."/>
            <person name="Crouzet M."/>
            <person name="Cziepluch C."/>
            <person name="Demolis N."/>
            <person name="Delaveau T."/>
            <person name="Doignon F."/>
            <person name="Domdey H."/>
            <person name="Duesterhus S."/>
            <person name="Dubois E."/>
            <person name="Dujon B."/>
            <person name="El Bakkoury M."/>
            <person name="Entian K.-D."/>
            <person name="Feuermann M."/>
            <person name="Fiers W."/>
            <person name="Fobo G.M."/>
            <person name="Fritz C."/>
            <person name="Gassenhuber J."/>
            <person name="Glansdorff N."/>
            <person name="Goffeau A."/>
            <person name="Grivell L.A."/>
            <person name="de Haan M."/>
            <person name="Hein C."/>
            <person name="Herbert C.J."/>
            <person name="Hollenberg C.P."/>
            <person name="Holmstroem K."/>
            <person name="Jacq C."/>
            <person name="Jacquet M."/>
            <person name="Jauniaux J.-C."/>
            <person name="Jonniaux J.-L."/>
            <person name="Kallesoee T."/>
            <person name="Kiesau P."/>
            <person name="Kirchrath L."/>
            <person name="Koetter P."/>
            <person name="Korol S."/>
            <person name="Liebl S."/>
            <person name="Logghe M."/>
            <person name="Lohan A.J.E."/>
            <person name="Louis E.J."/>
            <person name="Li Z.Y."/>
            <person name="Maat M.J."/>
            <person name="Mallet L."/>
            <person name="Mannhaupt G."/>
            <person name="Messenguy F."/>
            <person name="Miosga T."/>
            <person name="Molemans F."/>
            <person name="Mueller S."/>
            <person name="Nasr F."/>
            <person name="Obermaier B."/>
            <person name="Perea J."/>
            <person name="Pierard A."/>
            <person name="Piravandi E."/>
            <person name="Pohl F.M."/>
            <person name="Pohl T.M."/>
            <person name="Potier S."/>
            <person name="Proft M."/>
            <person name="Purnelle B."/>
            <person name="Ramezani Rad M."/>
            <person name="Rieger M."/>
            <person name="Rose M."/>
            <person name="Schaaff-Gerstenschlaeger I."/>
            <person name="Scherens B."/>
            <person name="Schwarzlose C."/>
            <person name="Skala J."/>
            <person name="Slonimski P.P."/>
            <person name="Smits P.H.M."/>
            <person name="Souciet J.-L."/>
            <person name="Steensma H.Y."/>
            <person name="Stucka R."/>
            <person name="Urrestarazu L.A."/>
            <person name="van der Aart Q.J.M."/>
            <person name="Van Dyck L."/>
            <person name="Vassarotti A."/>
            <person name="Vetter I."/>
            <person name="Vierendeels F."/>
            <person name="Vissers S."/>
            <person name="Wagner G."/>
            <person name="de Wergifosse P."/>
            <person name="Wolfe K.H."/>
            <person name="Zagulski M."/>
            <person name="Zimmermann F.K."/>
            <person name="Mewes H.-W."/>
            <person name="Kleine K."/>
        </authorList>
    </citation>
    <scope>NUCLEOTIDE SEQUENCE [LARGE SCALE GENOMIC DNA] (TEF2)</scope>
    <source>
        <strain>ATCC 204508 / S288c</strain>
    </source>
</reference>
<reference key="7">
    <citation type="journal article" date="1997" name="Nature">
        <title>The nucleotide sequence of Saccharomyces cerevisiae chromosome XVI.</title>
        <authorList>
            <person name="Bussey H."/>
            <person name="Storms R.K."/>
            <person name="Ahmed A."/>
            <person name="Albermann K."/>
            <person name="Allen E."/>
            <person name="Ansorge W."/>
            <person name="Araujo R."/>
            <person name="Aparicio A."/>
            <person name="Barrell B.G."/>
            <person name="Badcock K."/>
            <person name="Benes V."/>
            <person name="Botstein D."/>
            <person name="Bowman S."/>
            <person name="Brueckner M."/>
            <person name="Carpenter J."/>
            <person name="Cherry J.M."/>
            <person name="Chung E."/>
            <person name="Churcher C.M."/>
            <person name="Coster F."/>
            <person name="Davis K."/>
            <person name="Davis R.W."/>
            <person name="Dietrich F.S."/>
            <person name="Delius H."/>
            <person name="DiPaolo T."/>
            <person name="Dubois E."/>
            <person name="Duesterhoeft A."/>
            <person name="Duncan M."/>
            <person name="Floeth M."/>
            <person name="Fortin N."/>
            <person name="Friesen J.D."/>
            <person name="Fritz C."/>
            <person name="Goffeau A."/>
            <person name="Hall J."/>
            <person name="Hebling U."/>
            <person name="Heumann K."/>
            <person name="Hilbert H."/>
            <person name="Hillier L.W."/>
            <person name="Hunicke-Smith S."/>
            <person name="Hyman R.W."/>
            <person name="Johnston M."/>
            <person name="Kalman S."/>
            <person name="Kleine K."/>
            <person name="Komp C."/>
            <person name="Kurdi O."/>
            <person name="Lashkari D."/>
            <person name="Lew H."/>
            <person name="Lin A."/>
            <person name="Lin D."/>
            <person name="Louis E.J."/>
            <person name="Marathe R."/>
            <person name="Messenguy F."/>
            <person name="Mewes H.-W."/>
            <person name="Mirtipati S."/>
            <person name="Moestl D."/>
            <person name="Mueller-Auer S."/>
            <person name="Namath A."/>
            <person name="Nentwich U."/>
            <person name="Oefner P."/>
            <person name="Pearson D."/>
            <person name="Petel F.X."/>
            <person name="Pohl T.M."/>
            <person name="Purnelle B."/>
            <person name="Rajandream M.A."/>
            <person name="Rechmann S."/>
            <person name="Rieger M."/>
            <person name="Riles L."/>
            <person name="Roberts D."/>
            <person name="Schaefer M."/>
            <person name="Scharfe M."/>
            <person name="Scherens B."/>
            <person name="Schramm S."/>
            <person name="Schroeder M."/>
            <person name="Sdicu A.-M."/>
            <person name="Tettelin H."/>
            <person name="Urrestarazu L.A."/>
            <person name="Ushinsky S."/>
            <person name="Vierendeels F."/>
            <person name="Vissers S."/>
            <person name="Voss H."/>
            <person name="Walsh S.V."/>
            <person name="Wambutt R."/>
            <person name="Wang Y."/>
            <person name="Wedler E."/>
            <person name="Wedler H."/>
            <person name="Winnett E."/>
            <person name="Zhong W.-W."/>
            <person name="Zollner A."/>
            <person name="Vo D.H."/>
            <person name="Hani J."/>
        </authorList>
    </citation>
    <scope>NUCLEOTIDE SEQUENCE [LARGE SCALE GENOMIC DNA] (TEF1)</scope>
    <source>
        <strain>ATCC 204508 / S288c</strain>
    </source>
</reference>
<reference key="8">
    <citation type="journal article" date="2014" name="G3 (Bethesda)">
        <title>The reference genome sequence of Saccharomyces cerevisiae: Then and now.</title>
        <authorList>
            <person name="Engel S.R."/>
            <person name="Dietrich F.S."/>
            <person name="Fisk D.G."/>
            <person name="Binkley G."/>
            <person name="Balakrishnan R."/>
            <person name="Costanzo M.C."/>
            <person name="Dwight S.S."/>
            <person name="Hitz B.C."/>
            <person name="Karra K."/>
            <person name="Nash R.S."/>
            <person name="Weng S."/>
            <person name="Wong E.D."/>
            <person name="Lloyd P."/>
            <person name="Skrzypek M.S."/>
            <person name="Miyasato S.R."/>
            <person name="Simison M."/>
            <person name="Cherry J.M."/>
        </authorList>
    </citation>
    <scope>GENOME REANNOTATION (TEF1 AND TEF2)</scope>
    <source>
        <strain>ATCC 204508 / S288c</strain>
    </source>
</reference>
<reference key="9">
    <citation type="journal article" date="2007" name="Genome Res.">
        <title>Approaching a complete repository of sequence-verified protein-encoding clones for Saccharomyces cerevisiae.</title>
        <authorList>
            <person name="Hu Y."/>
            <person name="Rolfs A."/>
            <person name="Bhullar B."/>
            <person name="Murthy T.V.S."/>
            <person name="Zhu C."/>
            <person name="Berger M.F."/>
            <person name="Camargo A.A."/>
            <person name="Kelley F."/>
            <person name="McCarron S."/>
            <person name="Jepson D."/>
            <person name="Richardson A."/>
            <person name="Raphael J."/>
            <person name="Moreira D."/>
            <person name="Taycher E."/>
            <person name="Zuo D."/>
            <person name="Mohr S."/>
            <person name="Kane M.F."/>
            <person name="Williamson J."/>
            <person name="Simpson A.J.G."/>
            <person name="Bulyk M.L."/>
            <person name="Harlow E."/>
            <person name="Marsischky G."/>
            <person name="Kolodner R.D."/>
            <person name="LaBaer J."/>
        </authorList>
    </citation>
    <scope>NUCLEOTIDE SEQUENCE [GENOMIC DNA] (TEF1)</scope>
    <source>
        <strain>ATCC 204508 / S288c</strain>
    </source>
</reference>
<reference key="10">
    <citation type="journal article" date="1993" name="Eur. J. Biochem.">
        <title>TKL2, a second transketolase gene of Saccharomyces cerevisiae. Cloning, sequence and deletion analysis of the gene.</title>
        <authorList>
            <person name="Schaaff-Gerstenschlaeger I."/>
            <person name="Mannhaupt G."/>
            <person name="Vetter I."/>
            <person name="Zimmermann F.K."/>
            <person name="Feldmann H."/>
        </authorList>
    </citation>
    <scope>NUCLEOTIDE SEQUENCE [GENOMIC DNA] OF 1-237 (TEF1)</scope>
    <source>
        <strain>ATCC 204508 / S288c</strain>
    </source>
</reference>
<reference key="11">
    <citation type="journal article" date="1993" name="Biochim. Biophys. Acta">
        <title>Characterization of yeast EF-1 alpha: non-conservation of post-translational modifications.</title>
        <authorList>
            <person name="Cavallius J."/>
            <person name="Zoll W."/>
            <person name="Chakraburtty K."/>
            <person name="Merrick W.C."/>
        </authorList>
    </citation>
    <scope>PARTIAL PROTEIN SEQUENCE</scope>
    <scope>METHYLATION AT LYS-30; LYS-79; LYS-316 AND LYS-390</scope>
</reference>
<reference key="12">
    <citation type="journal article" date="1997" name="Biochem. Biophys. Res. Commun.">
        <title>Association of elongation factor 1 alpha and ribosomal protein L3 with the proline-rich region of yeast adenylyl cyclase-associated protein CAP.</title>
        <authorList>
            <person name="Yanagihara C."/>
            <person name="Shinkai M."/>
            <person name="Kariya K."/>
            <person name="Yamawaki-Kataoka Y."/>
            <person name="Hu C.-D."/>
            <person name="Masuda T."/>
            <person name="Kataoka T."/>
        </authorList>
    </citation>
    <scope>PROTEIN SEQUENCE OF 6-20</scope>
    <scope>INTERACTION WITH SRV2</scope>
</reference>
<reference key="13">
    <citation type="journal article" date="1997" name="Yeast">
        <title>Two-dimensional electrophoretic separation of yeast proteins using a non-linear wide range (pH 3-10) immobilized pH gradient in the first dimension; reproducibility and evidence for isoelectric focusing of alkaline (pI &gt; 7) proteins.</title>
        <authorList>
            <person name="Norbeck J."/>
            <person name="Blomberg A."/>
        </authorList>
    </citation>
    <scope>PROTEIN SEQUENCE OF 56-61 AND 265-280</scope>
    <source>
        <strain>ATCC 44827 / SKQ2N</strain>
    </source>
</reference>
<reference key="14">
    <citation type="journal article" date="1985" name="J. Biol. Chem.">
        <title>Elongation factor 1 alpha from Saccharomyces cerevisiae. Rapid large-scale purification and molecular characterization.</title>
        <authorList>
            <person name="Thiele D."/>
            <person name="Cottrelle P."/>
            <person name="Iborra F."/>
            <person name="Buhler J.-M."/>
            <person name="Sentenac A."/>
            <person name="Fromageot P."/>
        </authorList>
    </citation>
    <scope>PROTEIN SEQUENCE OF 70-77 AND 80-87</scope>
</reference>
<reference key="15">
    <citation type="journal article" date="1998" name="Oncogene">
        <title>Interaction of Rho1p target Bni1p with F-actin-binding elongation factor 1alpha: implication in Rho1p-regulated reorganization of the actin cytoskeleton in Saccharomyces cerevisiae.</title>
        <authorList>
            <person name="Umikawa M."/>
            <person name="Tanaka K."/>
            <person name="Kamei T."/>
            <person name="Shimizu K."/>
            <person name="Imamura H."/>
            <person name="Sasaki T."/>
            <person name="Takai Y."/>
        </authorList>
    </citation>
    <scope>PROTEIN SEQUENCE OF 211-214 AND 289-308</scope>
    <scope>INTERACTION WITH BNI1</scope>
    <scope>IDENTIFICATION IN A COMPLEX WITH BNI1 AND PROFILIN</scope>
</reference>
<reference key="16">
    <citation type="journal article" date="2003" name="FEMS Yeast Res.">
        <title>Phylogenetic relationships among yeasts of the 'Saccharomyces complex' determined from multigene sequence analyses.</title>
        <authorList>
            <person name="Kurtzman C.P."/>
            <person name="Robnett C.J."/>
        </authorList>
    </citation>
    <scope>NUCLEOTIDE SEQUENCE [GENOMIC DNA] OF 22-397</scope>
    <source>
        <strain>ATCC 13507 / CBS 459 / NRRL Y-12649</strain>
        <strain>ATCC 18824 / CBS 1171 / DSM 70449 / IFO 10217 / NRRL Y-12632</strain>
        <strain>ATCC 24702 / NRRL Y-2034</strain>
        <strain>Diastaticus / ATCC 13007 / CBS 1782 / IFO 1046 / NRRL Y-2416</strain>
        <strain>NRRL YB-210</strain>
    </source>
</reference>
<reference key="17">
    <citation type="journal article" date="1988" name="Genetics">
        <title>Mutations in elongation factor EF-1 alpha affect the frequency of frameshifting and amino acid misincorporation in Saccharomyces cerevisiae.</title>
        <authorList>
            <person name="Sandbaken M.G."/>
            <person name="Culbertson M.R."/>
        </authorList>
    </citation>
    <scope>FUNCTION</scope>
    <scope>MUTAGENESIS OF GLU-286 AND GLU-317</scope>
</reference>
<reference key="18">
    <citation type="journal article" date="1998" name="Eur. J. Biochem.">
        <title>Competition and cooperation amongst yeast elongation factors.</title>
        <authorList>
            <person name="Kovalchuke O."/>
            <person name="Kambampati R."/>
            <person name="Pladies E."/>
            <person name="Chakraburtty K."/>
        </authorList>
    </citation>
    <scope>INTERACTION WITH YEF3</scope>
    <scope>MUTAGENESIS OF GLU-122</scope>
</reference>
<reference key="19">
    <citation type="journal article" date="1998" name="J. Biol. Chem.">
        <title>Site-directed mutagenesis of yeast eEF1A. Viable mutants with altered nucleotide specificity.</title>
        <authorList>
            <person name="Cavallius J."/>
            <person name="Merrick W.C."/>
        </authorList>
    </citation>
    <scope>BIOPHYSICOCHEMICAL PROPERTIES</scope>
    <scope>MUTAGENESIS OF ASN-153 AND ASP-156</scope>
</reference>
<reference key="20">
    <citation type="journal article" date="1998" name="J. Cell Biol.">
        <title>Interaction of ZPR1 with translation elongation factor-1alpha in proliferating cells.</title>
        <authorList>
            <person name="Gangwani L."/>
            <person name="Mikrut M."/>
            <person name="Galcheva-Gargova Z."/>
            <person name="Davis R.J."/>
        </authorList>
    </citation>
    <scope>IDENTIFICATION BY MASS SPECTROMETRY</scope>
    <scope>INTERACTION WITH ZPR1</scope>
</reference>
<reference key="21">
    <citation type="journal article" date="1999" name="J. Biol. Chem.">
        <title>Mutations in a GTP-binding motif of eukaryotic elongation factor 1A reduce both translational fidelity and the requirement for nucleotide exchange.</title>
        <authorList>
            <person name="Carr-Schmid A."/>
            <person name="Durko N."/>
            <person name="Cavallius J."/>
            <person name="Merrick W.C."/>
            <person name="Kinzy T.G."/>
        </authorList>
    </citation>
    <scope>MUTAGENESIS OF ASN-153 AND ASP-156</scope>
</reference>
<reference key="22">
    <citation type="journal article" date="2000" name="Genes Dev.">
        <title>An aminoacylation-dependent nuclear tRNA export pathway in yeast.</title>
        <authorList>
            <person name="Grosshans H."/>
            <person name="Hurt E.C."/>
            <person name="Simos G."/>
        </authorList>
    </citation>
    <scope>FUNCTION IN NUCLEAR EXPORT OF AMINOACYL-TRNAS</scope>
</reference>
<reference key="23">
    <citation type="journal article" date="2000" name="J. Biol. Chem.">
        <title>A novel post-translational modification of yeast elongation factor 1A. Methylesterification at the C-terminus.</title>
        <authorList>
            <person name="Zobel-Thropp P."/>
            <person name="Yang M.C."/>
            <person name="Machado L."/>
            <person name="Clarke S."/>
        </authorList>
    </citation>
    <scope>METHYLATION AT LYS-458</scope>
</reference>
<reference key="24">
    <citation type="journal article" date="2001" name="Genetics">
        <title>Overexpression of translation elongation factor 1A affects the organization and function of the actin cytoskeleton in yeast.</title>
        <authorList>
            <person name="Munshi R."/>
            <person name="Kandl K.A."/>
            <person name="Carr-Schmid A."/>
            <person name="Whitacre J.L."/>
            <person name="Adams A.E.M."/>
            <person name="Kinzy T.G."/>
        </authorList>
    </citation>
    <scope>INTERACTION WITH ACTIN</scope>
</reference>
<reference key="25">
    <citation type="journal article" date="2003" name="Biochem. J.">
        <title>Protein S-thiolation targets glycolysis and protein synthesis in response to oxidative stress in the yeast Saccharomyces cerevisiae.</title>
        <authorList>
            <person name="Shenton D."/>
            <person name="Grant C.M."/>
        </authorList>
    </citation>
    <scope>S-THIOLATION</scope>
</reference>
<reference key="26">
    <citation type="journal article" date="2003" name="Nature">
        <title>Global analysis of protein localization in budding yeast.</title>
        <authorList>
            <person name="Huh W.-K."/>
            <person name="Falvo J.V."/>
            <person name="Gerke L.C."/>
            <person name="Carroll A.S."/>
            <person name="Howson R.W."/>
            <person name="Weissman J.S."/>
            <person name="O'Shea E.K."/>
        </authorList>
    </citation>
    <scope>SUBCELLULAR LOCATION [LARGE SCALE ANALYSIS]</scope>
</reference>
<reference key="27">
    <citation type="journal article" date="2003" name="Nature">
        <title>Global analysis of protein expression in yeast.</title>
        <authorList>
            <person name="Ghaemmaghami S."/>
            <person name="Huh W.-K."/>
            <person name="Bower K."/>
            <person name="Howson R.W."/>
            <person name="Belle A."/>
            <person name="Dephoure N."/>
            <person name="O'Shea E.K."/>
            <person name="Weissman J.S."/>
        </authorList>
    </citation>
    <scope>LEVEL OF PROTEIN EXPRESSION [LARGE SCALE ANALYSIS]</scope>
</reference>
<reference key="28">
    <citation type="journal article" date="2005" name="Mol. Cell. Biol.">
        <title>Proteasome-mediated degradation of cotranslationally damaged proteins involves translation elongation factor 1A.</title>
        <authorList>
            <person name="Chuang S.-M."/>
            <person name="Chen L."/>
            <person name="Lambertson D."/>
            <person name="Anand M."/>
            <person name="Kinzy T.G."/>
            <person name="Madura K."/>
        </authorList>
    </citation>
    <scope>FUNCTION</scope>
    <scope>MUTAGENESIS OF ASP-156</scope>
    <scope>INTERACTION WITH RPT1</scope>
</reference>
<reference key="29">
    <citation type="journal article" date="2007" name="EMBO J.">
        <title>Cex1p is a novel cytoplasmic component of the Saccharomyces cerevisiae nuclear tRNA export machinery.</title>
        <authorList>
            <person name="McGuire A.T."/>
            <person name="Mangroo D."/>
        </authorList>
    </citation>
    <scope>INTERACTION WITH CEX1</scope>
</reference>
<reference key="30">
    <citation type="journal article" date="2007" name="Proc. Natl. Acad. Sci. U.S.A.">
        <title>Analysis of phosphorylation sites on proteins from Saccharomyces cerevisiae by electron transfer dissociation (ETD) mass spectrometry.</title>
        <authorList>
            <person name="Chi A."/>
            <person name="Huttenhower C."/>
            <person name="Geer L.Y."/>
            <person name="Coon J.J."/>
            <person name="Syka J.E.P."/>
            <person name="Bai D.L."/>
            <person name="Shabanowitz J."/>
            <person name="Burke D.J."/>
            <person name="Troyanskaya O.G."/>
            <person name="Hunt D.F."/>
        </authorList>
    </citation>
    <scope>PHOSPHORYLATION [LARGE SCALE ANALYSIS] AT SER-18; THR-72; THR-82; SER-163 AND THR-430</scope>
    <scope>IDENTIFICATION BY MASS SPECTROMETRY [LARGE SCALE ANALYSIS]</scope>
</reference>
<reference key="31">
    <citation type="journal article" date="2008" name="Mol. Cell. Biol.">
        <title>Phosphorylation by casein kinase 2 regulates Nap1 localization and function.</title>
        <authorList>
            <person name="Calvert M.E.K."/>
            <person name="Keck K.M."/>
            <person name="Ptak C."/>
            <person name="Shabanowitz J."/>
            <person name="Hunt D.F."/>
            <person name="Pemberton L.F."/>
        </authorList>
    </citation>
    <scope>INTERACTION WITH NAP1</scope>
    <scope>IDENTIFICATION BY MASS SPECTROMETRY</scope>
</reference>
<reference key="32">
    <citation type="journal article" date="2008" name="Mol. Cell. Proteomics">
        <title>A multidimensional chromatography technology for in-depth phosphoproteome analysis.</title>
        <authorList>
            <person name="Albuquerque C.P."/>
            <person name="Smolka M.B."/>
            <person name="Payne S.H."/>
            <person name="Bafna V."/>
            <person name="Eng J."/>
            <person name="Zhou H."/>
        </authorList>
    </citation>
    <scope>PHOSPHORYLATION [LARGE SCALE ANALYSIS] AT THR-259 AND SER-414</scope>
    <scope>IDENTIFICATION BY MASS SPECTROMETRY [LARGE SCALE ANALYSIS]</scope>
</reference>
<reference key="33">
    <citation type="journal article" date="2009" name="Science">
        <title>Global analysis of Cdk1 substrate phosphorylation sites provides insights into evolution.</title>
        <authorList>
            <person name="Holt L.J."/>
            <person name="Tuch B.B."/>
            <person name="Villen J."/>
            <person name="Johnson A.D."/>
            <person name="Gygi S.P."/>
            <person name="Morgan D.O."/>
        </authorList>
    </citation>
    <scope>PHOSPHORYLATION [LARGE SCALE ANALYSIS] AT SER-289</scope>
    <scope>IDENTIFICATION BY MASS SPECTROMETRY [LARGE SCALE ANALYSIS]</scope>
</reference>
<reference key="34">
    <citation type="journal article" date="2010" name="Arch. Biochem. Biophys.">
        <title>Two novel methyltransferases acting upon eukaryotic elongation factor 1A in Saccharomyces cerevisiae.</title>
        <authorList>
            <person name="Lipson R.S."/>
            <person name="Webb K.J."/>
            <person name="Clarke S.G."/>
        </authorList>
    </citation>
    <scope>METHYLATION</scope>
</reference>
<reference key="35">
    <citation type="journal article" date="2010" name="FASEB J.">
        <title>Targeting of eEF1A with Amaryllidaceae isocarbostyrils as a strategy to combat melanomas.</title>
        <authorList>
            <person name="Van Goietsenoven G."/>
            <person name="Hutton J."/>
            <person name="Becker J.P."/>
            <person name="Lallemand B."/>
            <person name="Robert F."/>
            <person name="Lefranc F."/>
            <person name="Pirker C."/>
            <person name="Vandenbussche G."/>
            <person name="Van Antwerpen P."/>
            <person name="Evidente A."/>
            <person name="Berger W."/>
            <person name="Prevost M."/>
            <person name="Pelletier J."/>
            <person name="Kiss R."/>
            <person name="Kinzy T.G."/>
            <person name="Kornienko A."/>
            <person name="Mathieu V."/>
        </authorList>
    </citation>
    <scope>ACTIVITY REGULATION</scope>
</reference>
<reference key="36">
    <citation type="journal article" date="2015" name="FASEB J.">
        <authorList>
            <person name="Van Goietsenoven G."/>
            <person name="Hutton J."/>
            <person name="Becker J.P."/>
            <person name="Lallemand B."/>
            <person name="Robert F."/>
            <person name="Lefranc F."/>
            <person name="Pirker C."/>
            <person name="Vandenbussche G."/>
            <person name="Van Antwerpen P."/>
            <person name="Evidente A."/>
            <person name="Berger W."/>
            <person name="Prevost M."/>
            <person name="Pelletier J."/>
            <person name="Kiss R."/>
            <person name="Kinzy T.G."/>
            <person name="Kornienko A."/>
            <person name="Mathieu V."/>
        </authorList>
    </citation>
    <scope>ERRATUM OF PUBMED:20643906</scope>
</reference>
<reference key="37">
    <citation type="journal article" date="2011" name="J. Biol. Chem.">
        <title>Evidence that eukaryotic translation elongation factor 1A (eEF1A) binds the Gcn2 protein C terminus and inhibits Gcn2 activity.</title>
        <authorList>
            <person name="Visweswaraiah J."/>
            <person name="Lageix S."/>
            <person name="Castilho B.A."/>
            <person name="Izotova L."/>
            <person name="Kinzy T.G."/>
            <person name="Hinnebusch A.G."/>
            <person name="Sattlegger E."/>
        </authorList>
    </citation>
    <scope>FUNCTION</scope>
    <scope>INTERACTION WITH GCN2</scope>
    <scope>ASSOCIATION WITH RIBOSOMES</scope>
</reference>
<reference key="38">
    <citation type="journal article" date="2012" name="Proteomics">
        <title>Sites of ubiquitin attachment in Saccharomyces cerevisiae.</title>
        <authorList>
            <person name="Starita L.M."/>
            <person name="Lo R.S."/>
            <person name="Eng J.K."/>
            <person name="von Haller P.D."/>
            <person name="Fields S."/>
        </authorList>
    </citation>
    <scope>UBIQUITINATION [LARGE SCALE ANALYSIS] AT LYS-224; LYS-242; LYS-253; LYS-271; LYS-393 AND LYS-437</scope>
    <scope>IDENTIFICATION BY MASS SPECTROMETRY [LARGE SCALE ANALYSIS]</scope>
</reference>
<reference key="39">
    <citation type="journal article" date="2012" name="Proteomics">
        <title>Methylation of translation-associated proteins in Saccharomyces cerevisiae: Identification of methylated lysines and their methyltransferases.</title>
        <authorList>
            <person name="Couttas T.A."/>
            <person name="Raftery M.J."/>
            <person name="Padula M.P."/>
            <person name="Herbert B.R."/>
            <person name="Wilkins M.R."/>
        </authorList>
    </citation>
    <scope>METHYLATION AT LYS-30 BY EFM1</scope>
    <scope>METHYLATION AT LYS-316 BY EFM4</scope>
    <scope>METHYLATION AT LYS-79 AND LYS-390</scope>
</reference>
<reference key="40">
    <citation type="journal article" date="2014" name="Biochem. Biophys. Res. Commun.">
        <title>A new type of protein lysine methyltransferase trimethylates Lys-79 of elongation factor 1A.</title>
        <authorList>
            <person name="Dzialo M.C."/>
            <person name="Travaglini K.J."/>
            <person name="Shen S."/>
            <person name="Loo J.A."/>
            <person name="Clarke S.G."/>
        </authorList>
    </citation>
    <scope>METHYLATION AT LYS-79 BY EFM5</scope>
</reference>
<reference key="41">
    <citation type="journal article" date="2014" name="J. Proteome Res.">
        <title>Stoichiometry of Saccharomyces cerevisiae lysine methylation: insights into non-histone protein lysine methyltransferase activity.</title>
        <authorList>
            <person name="Hart-Smith G."/>
            <person name="Chia S.Z."/>
            <person name="Low J.K."/>
            <person name="McKay M.J."/>
            <person name="Molloy M.P."/>
            <person name="Wilkins M.R."/>
        </authorList>
    </citation>
    <scope>METHYLATION AT LYS-30; LYS-79 AND LYS-390</scope>
    <scope>METHYLATION AT LYS-316 BY EFM4</scope>
</reference>
<reference key="42">
    <citation type="journal article" date="2015" name="PLoS ONE">
        <title>Saccharomyces cerevisiae eukaryotic elongation factor 1A (eEF1A) is methylated at Lys-390 by a METTL21-like methyltransferase.</title>
        <authorList>
            <person name="Jakobsson M.E."/>
            <person name="Davydova E."/>
            <person name="Malecki J."/>
            <person name="Moen A."/>
            <person name="Falnes P.O."/>
        </authorList>
    </citation>
    <scope>METHYLATION AT LYS-390 BY EFM6</scope>
</reference>
<reference key="43">
    <citation type="journal article" date="2016" name="Mol. Cell. Proteomics">
        <title>Novel N-terminal and lysine methyltransferases that target translation elongation factor 1A in yeast and human.</title>
        <authorList>
            <person name="Hamey J.J."/>
            <person name="Winter D.L."/>
            <person name="Yagoub D."/>
            <person name="Overall C.M."/>
            <person name="Hart-Smith G."/>
            <person name="Wilkins M.R."/>
        </authorList>
    </citation>
    <scope>METHYLATION AT GLY-2 AND LYS-3 BY NNT1</scope>
</reference>
<reference key="44">
    <citation type="journal article" date="2023" name="Mol. Cell">
        <title>Zinc-finger protein Zpr1 is a bespoke chaperone essential for eEF1A biogenesis.</title>
        <authorList>
            <person name="Sabbarini I.M."/>
            <person name="Reif D."/>
            <person name="McQuown A.J."/>
            <person name="Nelliat A.R."/>
            <person name="Prince J."/>
            <person name="Membreno B.S."/>
            <person name="Wu C.C."/>
            <person name="Murray A.W."/>
            <person name="Denic V."/>
        </authorList>
    </citation>
    <scope>INTERACTION WITH ZPR1</scope>
</reference>
<reference key="45">
    <citation type="journal article" date="2024" name="J. Biol. Chem.">
        <title>Methylation of elongation factor 1A by yeast Efm4 or human eEF1A-KMT2 involves a beta-hairpin recognition motif and crosstalks with phosphorylation.</title>
        <authorList>
            <person name="Hamey J.J."/>
            <person name="Nguyen A."/>
            <person name="Haddad M."/>
            <person name="Vazquez-Campos X."/>
            <person name="Pfeiffer P.G."/>
            <person name="Wilkins M.R."/>
        </authorList>
    </citation>
    <scope>METHYLATION AT LYS-316 BY EFM4</scope>
</reference>
<reference key="46">
    <citation type="journal article" date="2000" name="Mol. Cell">
        <title>Structural basis for nucleotide exchange and competition with tRNA in the yeast elongation factor complex eEF1A:eEF1Balpha.</title>
        <authorList>
            <person name="Andersen G.R."/>
            <person name="Pedersen L."/>
            <person name="Valente L."/>
            <person name="Chatterjee I."/>
            <person name="Kinzy T.G."/>
            <person name="Kjeldgaard M."/>
            <person name="Nyborg J."/>
        </authorList>
    </citation>
    <scope>X-RAY CRYSTALLOGRAPHY (1.67 ANGSTROMS) IN COMPLEX WITH EFB1</scope>
</reference>
<reference key="47">
    <citation type="journal article" date="2001" name="Nat. Struct. Biol.">
        <title>Crystal structures of nucleotide exchange intermediates in the eEF1A-eEF1Balpha complex.</title>
        <authorList>
            <person name="Andersen G.R."/>
            <person name="Valente L."/>
            <person name="Pedersen L."/>
            <person name="Kinzy T.G."/>
            <person name="Nyborg J."/>
        </authorList>
    </citation>
    <scope>X-RAY CRYSTALLOGRAPHY (2.05 ANGSTROMS) IN COMPLEX WITH EFB1; GDP AND GMP</scope>
</reference>
<reference evidence="36 37" key="48">
    <citation type="journal article" date="2006" name="J. Biol. Chem.">
        <title>Mg2+ and a key lysine modulate exchange activity of eukaryotic translation elongation factor 1B alpha.</title>
        <authorList>
            <person name="Pittman Y.R."/>
            <person name="Valente L."/>
            <person name="Jeppesen M.G."/>
            <person name="Andersen G.R."/>
            <person name="Patel S."/>
            <person name="Kinzy T.G."/>
        </authorList>
    </citation>
    <scope>X-RAY CRYSTALLOGRAPHY (1.80 ANGSTROMS) IN COMPLEX WITH GDP</scope>
</reference>
<reference evidence="38" key="49">
    <citation type="journal article" date="2017" name="J. Biol. Chem.">
        <title>Protein glutaminylation is a yeast-specific posttranslational modification of elongation factor 1A.</title>
        <authorList>
            <person name="Jank T."/>
            <person name="Belyi Y."/>
            <person name="Wirth C."/>
            <person name="Rospert S."/>
            <person name="Hu Z."/>
            <person name="Dengjel J."/>
            <person name="Tzivelekidis T."/>
            <person name="Andersen G.R."/>
            <person name="Hunte C."/>
            <person name="Schlosser A."/>
            <person name="Aktories K."/>
        </authorList>
    </citation>
    <scope>X-RAY CRYSTALLOGRAPHY (1.67 ANGSTROMS)</scope>
    <scope>GLUTAMINYLATION AT GLU-45</scope>
</reference>
<feature type="initiator methionine" description="Removed" evidence="21">
    <location>
        <position position="1"/>
    </location>
</feature>
<feature type="chain" id="PRO_0000090973" description="Elongation factor 1-alpha">
    <location>
        <begin position="2"/>
        <end position="458"/>
    </location>
</feature>
<feature type="domain" description="tr-type G" evidence="1">
    <location>
        <begin position="5"/>
        <end position="240"/>
    </location>
</feature>
<feature type="region of interest" description="G1" evidence="1">
    <location>
        <begin position="14"/>
        <end position="21"/>
    </location>
</feature>
<feature type="region of interest" description="G2" evidence="1">
    <location>
        <begin position="70"/>
        <end position="74"/>
    </location>
</feature>
<feature type="region of interest" description="G3" evidence="1">
    <location>
        <begin position="91"/>
        <end position="94"/>
    </location>
</feature>
<feature type="region of interest" description="G4" evidence="1">
    <location>
        <begin position="153"/>
        <end position="156"/>
    </location>
</feature>
<feature type="region of interest" description="G5" evidence="1">
    <location>
        <begin position="192"/>
        <end position="194"/>
    </location>
</feature>
<feature type="binding site" evidence="7 12 33 34 36">
    <location>
        <position position="21"/>
    </location>
    <ligand>
        <name>GTP</name>
        <dbReference type="ChEBI" id="CHEBI:37565"/>
    </ligand>
</feature>
<feature type="binding site" evidence="7 12 33 34 35 36">
    <location>
        <position position="22"/>
    </location>
    <ligand>
        <name>GTP</name>
        <dbReference type="ChEBI" id="CHEBI:37565"/>
    </ligand>
</feature>
<feature type="binding site" evidence="7 12 33 34 36">
    <location>
        <position position="153"/>
    </location>
    <ligand>
        <name>GTP</name>
        <dbReference type="ChEBI" id="CHEBI:37565"/>
    </ligand>
</feature>
<feature type="binding site" evidence="7 12 33 34 35 36">
    <location>
        <position position="154"/>
    </location>
    <ligand>
        <name>GTP</name>
        <dbReference type="ChEBI" id="CHEBI:37565"/>
    </ligand>
</feature>
<feature type="binding site" evidence="7 12 33 34 35 36">
    <location>
        <position position="156"/>
    </location>
    <ligand>
        <name>GTP</name>
        <dbReference type="ChEBI" id="CHEBI:37565"/>
    </ligand>
</feature>
<feature type="binding site" evidence="7 12 33 34 35 36">
    <location>
        <position position="192"/>
    </location>
    <ligand>
        <name>GTP</name>
        <dbReference type="ChEBI" id="CHEBI:37565"/>
    </ligand>
</feature>
<feature type="binding site" evidence="7 12 33 34 35">
    <location>
        <position position="193"/>
    </location>
    <ligand>
        <name>GTP</name>
        <dbReference type="ChEBI" id="CHEBI:37565"/>
    </ligand>
</feature>
<feature type="binding site" evidence="7 12 33 34 35 36">
    <location>
        <position position="194"/>
    </location>
    <ligand>
        <name>GTP</name>
        <dbReference type="ChEBI" id="CHEBI:37565"/>
    </ligand>
</feature>
<feature type="site" description="Not modified">
    <location>
        <position position="298"/>
    </location>
</feature>
<feature type="site" description="Not modified">
    <location>
        <position position="372"/>
    </location>
</feature>
<feature type="modified residue" description="N,N,N-trimethylglycine; by EFM7" evidence="21">
    <location>
        <position position="2"/>
    </location>
</feature>
<feature type="modified residue" description="N6,N6-dimethyllysine; by EFM7; alternate" evidence="21">
    <location>
        <position position="3"/>
    </location>
</feature>
<feature type="modified residue" description="N6-methyllysine; by EFM7; alternate" evidence="21">
    <location>
        <position position="3"/>
    </location>
</feature>
<feature type="modified residue" description="Phosphoserine" evidence="39">
    <location>
        <position position="18"/>
    </location>
</feature>
<feature type="modified residue" description="N6-methyllysine; by EFM1" evidence="17 18 26">
    <location>
        <position position="30"/>
    </location>
</feature>
<feature type="modified residue" description="Phosphothreonine" evidence="39">
    <location>
        <position position="72"/>
    </location>
</feature>
<feature type="modified residue" description="N6,N6,N6-trimethyllysine; by EFM5" evidence="17 18 19 26">
    <location>
        <position position="79"/>
    </location>
</feature>
<feature type="modified residue" description="Phosphothreonine" evidence="39">
    <location>
        <position position="82"/>
    </location>
</feature>
<feature type="modified residue" description="Phosphoserine" evidence="39">
    <location>
        <position position="163"/>
    </location>
</feature>
<feature type="modified residue" description="Phosphothreonine" evidence="40">
    <location>
        <position position="259"/>
    </location>
</feature>
<feature type="modified residue" description="Phosphoserine" evidence="41">
    <location>
        <position position="289"/>
    </location>
</feature>
<feature type="modified residue" description="N6,N6-dimethyllysine; by EFM4; alternate" evidence="17 18 25 26">
    <location>
        <position position="316"/>
    </location>
</feature>
<feature type="modified residue" description="N6-methyllysine; by EFM4; alternate" evidence="18 25">
    <location>
        <position position="316"/>
    </location>
</feature>
<feature type="modified residue" description="N6-methyllysine; by EFM6" evidence="17 18 20 26">
    <location>
        <position position="390"/>
    </location>
</feature>
<feature type="modified residue" description="Phosphoserine" evidence="40">
    <location>
        <position position="414"/>
    </location>
</feature>
<feature type="modified residue" description="Phosphothreonine" evidence="39">
    <location>
        <position position="430"/>
    </location>
</feature>
<feature type="modified residue" description="Lysine methyl ester" evidence="4">
    <location>
        <position position="458"/>
    </location>
</feature>
<feature type="cross-link" description="Glycyl lysine isopeptide (Lys-Gly) (interchain with G-Cter in ubiquitin)" evidence="42">
    <location>
        <position position="224"/>
    </location>
</feature>
<feature type="cross-link" description="Glycyl lysine isopeptide (Lys-Gly) (interchain with G-Cter in ubiquitin)" evidence="42">
    <location>
        <position position="242"/>
    </location>
</feature>
<feature type="cross-link" description="Glycyl lysine isopeptide (Lys-Gly) (interchain with G-Cter in ubiquitin)" evidence="42">
    <location>
        <position position="253"/>
    </location>
</feature>
<feature type="cross-link" description="Glycyl lysine isopeptide (Lys-Gly) (interchain with G-Cter in ubiquitin)" evidence="42">
    <location>
        <position position="271"/>
    </location>
</feature>
<feature type="cross-link" description="Glycyl lysine isopeptide (Lys-Gly) (interchain with G-Cter in ubiquitin)" evidence="42">
    <location>
        <position position="393"/>
    </location>
</feature>
<feature type="cross-link" description="Glycyl lysine isopeptide (Lys-Gly) (interchain with G-Cter in ubiquitin)" evidence="42">
    <location>
        <position position="437"/>
    </location>
</feature>
<feature type="mutagenesis site" description="Reduces interaction with YEF3." evidence="31">
    <original>E</original>
    <variation>K</variation>
    <location>
        <position position="122"/>
    </location>
</feature>
<feature type="mutagenesis site" description="Increases KM for GTP to 2.7 mM." evidence="2 29">
    <original>N</original>
    <variation>D</variation>
    <location>
        <position position="153"/>
    </location>
</feature>
<feature type="mutagenesis site" description="Increases KM for GTP to 6.0 mM and reduces translation fidelity. Increases Km for GTP to 10.3 mM and reduces translation fidelity; when associated with E-156." evidence="2 29">
    <original>N</original>
    <variation>T</variation>
    <location>
        <position position="153"/>
    </location>
</feature>
<feature type="mutagenesis site" description="Increases KM for GTP to 10.3 mM and reduces translation fidelity; when associated with T-152." evidence="2 11 29">
    <original>D</original>
    <variation>E</variation>
    <location>
        <position position="156"/>
    </location>
</feature>
<feature type="mutagenesis site" description="Increases KM for GTP to 13.1 mM and reduces translation fidelity. Confers hyperresistance to canavanine." evidence="2 11 29">
    <original>D</original>
    <variation>N</variation>
    <location>
        <position position="156"/>
    </location>
</feature>
<feature type="mutagenesis site" description="Increases KM for GTP to 4.2 mM. Preferres XTP over GTP as substrate." evidence="2 11 29">
    <original>D</original>
    <variation>W</variation>
    <location>
        <position position="156"/>
    </location>
</feature>
<feature type="mutagenesis site" description="In TEF2-1; strongly reduces translation fidelity by increasing the frequency of frameshifting and amino acid misincorporation." evidence="23">
    <original>E</original>
    <variation>K</variation>
    <location>
        <position position="286"/>
    </location>
</feature>
<feature type="mutagenesis site" description="In TEF2-2; strongly reduces translation fidelity by increasing the frequency of frameshifting and amino acid misincorporation." evidence="23">
    <original>E</original>
    <variation>K</variation>
    <location>
        <position position="317"/>
    </location>
</feature>
<feature type="sequence conflict" description="In Ref. 14; AA sequence." evidence="32" ref="14">
    <original>Q</original>
    <variation>E</variation>
    <location>
        <position position="86"/>
    </location>
</feature>
<feature type="strand" evidence="43">
    <location>
        <begin position="6"/>
        <end position="14"/>
    </location>
</feature>
<feature type="helix" evidence="43">
    <location>
        <begin position="20"/>
        <end position="31"/>
    </location>
</feature>
<feature type="helix" evidence="43">
    <location>
        <begin position="36"/>
        <end position="45"/>
    </location>
</feature>
<feature type="helix" evidence="43">
    <location>
        <begin position="46"/>
        <end position="49"/>
    </location>
</feature>
<feature type="strand" evidence="43">
    <location>
        <begin position="50"/>
        <end position="52"/>
    </location>
</feature>
<feature type="helix" evidence="43">
    <location>
        <begin position="56"/>
        <end position="68"/>
    </location>
</feature>
<feature type="strand" evidence="43">
    <location>
        <begin position="78"/>
        <end position="81"/>
    </location>
</feature>
<feature type="strand" evidence="43">
    <location>
        <begin position="83"/>
        <end position="91"/>
    </location>
</feature>
<feature type="helix" evidence="43">
    <location>
        <begin position="98"/>
        <end position="104"/>
    </location>
</feature>
<feature type="strand" evidence="43">
    <location>
        <begin position="105"/>
        <end position="107"/>
    </location>
</feature>
<feature type="strand" evidence="43">
    <location>
        <begin position="110"/>
        <end position="117"/>
    </location>
</feature>
<feature type="helix" evidence="43">
    <location>
        <begin position="120"/>
        <end position="126"/>
    </location>
</feature>
<feature type="helix" evidence="43">
    <location>
        <begin position="132"/>
        <end position="142"/>
    </location>
</feature>
<feature type="strand" evidence="43">
    <location>
        <begin position="147"/>
        <end position="153"/>
    </location>
</feature>
<feature type="helix" evidence="43">
    <location>
        <begin position="155"/>
        <end position="158"/>
    </location>
</feature>
<feature type="helix" evidence="43">
    <location>
        <begin position="162"/>
        <end position="179"/>
    </location>
</feature>
<feature type="helix" evidence="43">
    <location>
        <begin position="183"/>
        <end position="185"/>
    </location>
</feature>
<feature type="strand" evidence="43">
    <location>
        <begin position="188"/>
        <end position="190"/>
    </location>
</feature>
<feature type="turn" evidence="43">
    <location>
        <begin position="193"/>
        <end position="195"/>
    </location>
</feature>
<feature type="turn" evidence="43">
    <location>
        <begin position="197"/>
        <end position="199"/>
    </location>
</feature>
<feature type="strand" evidence="43">
    <location>
        <begin position="212"/>
        <end position="215"/>
    </location>
</feature>
<feature type="strand" evidence="43">
    <location>
        <begin position="217"/>
        <end position="225"/>
    </location>
</feature>
<feature type="helix" evidence="43">
    <location>
        <begin position="226"/>
        <end position="231"/>
    </location>
</feature>
<feature type="strand" evidence="44">
    <location>
        <begin position="239"/>
        <end position="242"/>
    </location>
</feature>
<feature type="strand" evidence="43">
    <location>
        <begin position="245"/>
        <end position="254"/>
    </location>
</feature>
<feature type="turn" evidence="43">
    <location>
        <begin position="255"/>
        <end position="257"/>
    </location>
</feature>
<feature type="strand" evidence="43">
    <location>
        <begin position="258"/>
        <end position="264"/>
    </location>
</feature>
<feature type="strand" evidence="43">
    <location>
        <begin position="275"/>
        <end position="279"/>
    </location>
</feature>
<feature type="turn" evidence="43">
    <location>
        <begin position="280"/>
        <end position="282"/>
    </location>
</feature>
<feature type="strand" evidence="43">
    <location>
        <begin position="283"/>
        <end position="292"/>
    </location>
</feature>
<feature type="strand" evidence="44">
    <location>
        <begin position="295"/>
        <end position="298"/>
    </location>
</feature>
<feature type="strand" evidence="43">
    <location>
        <begin position="305"/>
        <end position="312"/>
    </location>
</feature>
<feature type="turn" evidence="43">
    <location>
        <begin position="315"/>
        <end position="317"/>
    </location>
</feature>
<feature type="strand" evidence="43">
    <location>
        <begin position="323"/>
        <end position="326"/>
    </location>
</feature>
<feature type="strand" evidence="43">
    <location>
        <begin position="336"/>
        <end position="344"/>
    </location>
</feature>
<feature type="strand" evidence="43">
    <location>
        <begin position="358"/>
        <end position="361"/>
    </location>
</feature>
<feature type="strand" evidence="43">
    <location>
        <begin position="364"/>
        <end position="377"/>
    </location>
</feature>
<feature type="turn" evidence="43">
    <location>
        <begin position="379"/>
        <end position="381"/>
    </location>
</feature>
<feature type="strand" evidence="43">
    <location>
        <begin position="384"/>
        <end position="388"/>
    </location>
</feature>
<feature type="strand" evidence="43">
    <location>
        <begin position="397"/>
        <end position="406"/>
    </location>
</feature>
<feature type="turn" evidence="43">
    <location>
        <begin position="413"/>
        <end position="415"/>
    </location>
</feature>
<feature type="helix" evidence="43">
    <location>
        <begin position="417"/>
        <end position="419"/>
    </location>
</feature>
<feature type="strand" evidence="43">
    <location>
        <begin position="420"/>
        <end position="426"/>
    </location>
</feature>
<feature type="strand" evidence="43">
    <location>
        <begin position="429"/>
        <end position="440"/>
    </location>
</feature>
<evidence type="ECO:0000255" key="1">
    <source>
        <dbReference type="PROSITE-ProRule" id="PRU01059"/>
    </source>
</evidence>
<evidence type="ECO:0000269" key="2">
    <source>
    </source>
</evidence>
<evidence type="ECO:0000269" key="3">
    <source>
    </source>
</evidence>
<evidence type="ECO:0000269" key="4">
    <source>
    </source>
</evidence>
<evidence type="ECO:0000269" key="5">
    <source>
    </source>
</evidence>
<evidence type="ECO:0000269" key="6">
    <source>
    </source>
</evidence>
<evidence type="ECO:0000269" key="7">
    <source>
    </source>
</evidence>
<evidence type="ECO:0000269" key="8">
    <source>
    </source>
</evidence>
<evidence type="ECO:0000269" key="9">
    <source>
    </source>
</evidence>
<evidence type="ECO:0000269" key="10">
    <source>
    </source>
</evidence>
<evidence type="ECO:0000269" key="11">
    <source>
    </source>
</evidence>
<evidence type="ECO:0000269" key="12">
    <source>
    </source>
</evidence>
<evidence type="ECO:0000269" key="13">
    <source>
    </source>
</evidence>
<evidence type="ECO:0000269" key="14">
    <source>
    </source>
</evidence>
<evidence type="ECO:0000269" key="15">
    <source>
    </source>
</evidence>
<evidence type="ECO:0000269" key="16">
    <source>
    </source>
</evidence>
<evidence type="ECO:0000269" key="17">
    <source>
    </source>
</evidence>
<evidence type="ECO:0000269" key="18">
    <source>
    </source>
</evidence>
<evidence type="ECO:0000269" key="19">
    <source>
    </source>
</evidence>
<evidence type="ECO:0000269" key="20">
    <source>
    </source>
</evidence>
<evidence type="ECO:0000269" key="21">
    <source>
    </source>
</evidence>
<evidence type="ECO:0000269" key="22">
    <source>
    </source>
</evidence>
<evidence type="ECO:0000269" key="23">
    <source>
    </source>
</evidence>
<evidence type="ECO:0000269" key="24">
    <source>
    </source>
</evidence>
<evidence type="ECO:0000269" key="25">
    <source>
    </source>
</evidence>
<evidence type="ECO:0000269" key="26">
    <source>
    </source>
</evidence>
<evidence type="ECO:0000269" key="27">
    <source>
    </source>
</evidence>
<evidence type="ECO:0000269" key="28">
    <source>
    </source>
</evidence>
<evidence type="ECO:0000269" key="29">
    <source>
    </source>
</evidence>
<evidence type="ECO:0000269" key="30">
    <source>
    </source>
</evidence>
<evidence type="ECO:0000269" key="31">
    <source>
    </source>
</evidence>
<evidence type="ECO:0000305" key="32"/>
<evidence type="ECO:0007744" key="33">
    <source>
        <dbReference type="PDB" id="1G7C"/>
    </source>
</evidence>
<evidence type="ECO:0007744" key="34">
    <source>
        <dbReference type="PDB" id="1IJE"/>
    </source>
</evidence>
<evidence type="ECO:0007744" key="35">
    <source>
        <dbReference type="PDB" id="1IJF"/>
    </source>
</evidence>
<evidence type="ECO:0007744" key="36">
    <source>
        <dbReference type="PDB" id="2B7B"/>
    </source>
</evidence>
<evidence type="ECO:0007744" key="37">
    <source>
        <dbReference type="PDB" id="2B7C"/>
    </source>
</evidence>
<evidence type="ECO:0007744" key="38">
    <source>
        <dbReference type="PDB" id="5O8W"/>
    </source>
</evidence>
<evidence type="ECO:0007744" key="39">
    <source>
    </source>
</evidence>
<evidence type="ECO:0007744" key="40">
    <source>
    </source>
</evidence>
<evidence type="ECO:0007744" key="41">
    <source>
    </source>
</evidence>
<evidence type="ECO:0007744" key="42">
    <source>
    </source>
</evidence>
<evidence type="ECO:0007829" key="43">
    <source>
        <dbReference type="PDB" id="1F60"/>
    </source>
</evidence>
<evidence type="ECO:0007829" key="44">
    <source>
        <dbReference type="PDB" id="2B7C"/>
    </source>
</evidence>
<comment type="function">
    <text evidence="3 11 16 23">GTP-binding component of the eukaryotic elongation factor 1 complex (eEF1). In its active GTP-bound form, binds to and delivers aminoacyl-tRNA to the A-site of ribosomes during protein biosynthesis. In the presence of a correct codon-anticodon match between the aminoacyl-tRNA and the A-site codon of the ribosome-bound mRNA, the ribosome acts as a GTPase activator and the GTP is hydrolyzed. The inactive GDP-bound form leaves the ribosome and must be recycled by its guanine nucleotide exchange factor (GEF) (eEF1B subcomplex) before binding another molecule of aminoacyl-tRNA. Required for nuclear export of aminoacyl-tRNAs. May also be involved in translational quality control by targeting cotranslationally damaged proteins to the proteasome. Also exhibits actin filament-binding and -bundling activities and is involved in cytoskeleton organization. Plays a role as a negative regulator of GCN2 kinase activity by inhibiting GCN2-mediated eIF-2-alpha phosphorylation in amino acid-repleted cells (PubMed:21849502).</text>
</comment>
<comment type="activity regulation">
    <text evidence="15">Inhibited by narciclasine.</text>
</comment>
<comment type="biophysicochemical properties">
    <kinetics>
        <KM evidence="29">0.14 mM for GTP</KM>
    </kinetics>
</comment>
<comment type="pathway">
    <text>Protein biosynthesis; polypeptide chain elongation.</text>
</comment>
<comment type="subunit">
    <text evidence="5 6 7 11 13 14 16 24 27 28 30 31">The eukaryotic elongation factor 1 complex (eEF1) is probably a heterohexamer. Two trimeric complexes, each composed of eEF1A (TEF1 or TEF2), eEF1Balpha (EFB1) and eEF1Bgamma (CAM1 or TEF4), are probably dimerized via the eF1Bgamma subunits (PubMed:11106763, PubMed:11373622). Interacts with eEF1Balpha; the interaction is direct (PubMed:11106763, PubMed:11373622). Interacts with GCN2 (via C-terminus); this interaction is direct, occurs in amino acid-repleted cells, may be stabilized in a ribosome-dependent manner, reduces GCN2-mediated eIF-2-alpha phosphorylation and is lost in amino acid-starved cells and by uncharged tRNAs (PubMed:21849502). Interacts with CEX1 (PubMed:17203074). Interacts with elongation factor 3 (YEF3 or HEF3) (PubMed:9990316). Interacts with NAP1 (PubMed:18086883). Interacts with SRV2 (PubMed:9125210). Interacts with chaperone ZPR1; the interaction is required for its proper folding (PubMed:36630955, PubMed:9852145). Binds to actin and forms a ternary complex with BNI1 and profilin (PubMed:11290701, PubMed:9591785). Interacts with the proteasome, probably via RPT1 (PubMed:15601860). Associates with ribosomes (PubMed:21849502).</text>
</comment>
<comment type="interaction">
    <interactant intactId="EBI-6314">
        <id>P02994</id>
    </interactant>
    <interactant intactId="EBI-22787">
        <id>P43573</id>
        <label>BUD27</label>
    </interactant>
    <organismsDiffer>false</organismsDiffer>
    <experiments>2</experiments>
</comment>
<comment type="interaction">
    <interactant intactId="EBI-6314">
        <id>P02994</id>
    </interactant>
    <interactant intactId="EBI-6319">
        <id>P32471</id>
        <label>EFB1</label>
    </interactant>
    <organismsDiffer>false</organismsDiffer>
    <experiments>4</experiments>
</comment>
<comment type="interaction">
    <interactant intactId="EBI-6314">
        <id>P02994</id>
    </interactant>
    <interactant intactId="EBI-28053">
        <id>Q05040</id>
        <label>FAR8</label>
    </interactant>
    <organismsDiffer>false</organismsDiffer>
    <experiments>2</experiments>
</comment>
<comment type="interaction">
    <interactant intactId="EBI-6314">
        <id>P02994</id>
    </interactant>
    <interactant intactId="EBI-4024">
        <id>P17555</id>
        <label>SRV2</label>
    </interactant>
    <organismsDiffer>false</organismsDiffer>
    <experiments>3</experiments>
</comment>
<comment type="interaction">
    <interactant intactId="EBI-6314">
        <id>P02994</id>
    </interactant>
    <interactant intactId="EBI-11566629">
        <id>Q62384</id>
        <label>Zpr1</label>
    </interactant>
    <organismsDiffer>true</organismsDiffer>
    <experiments>2</experiments>
</comment>
<comment type="subcellular location">
    <subcellularLocation>
        <location evidence="9">Cytoplasm</location>
    </subcellularLocation>
    <subcellularLocation>
        <location evidence="9">Cytoplasm</location>
        <location evidence="9">Cytoskeleton</location>
    </subcellularLocation>
</comment>
<comment type="PTM">
    <text evidence="8">S-thiolated in response to oxidative stress, probably inhibiting the protein and causing a reduction in protein synthesis.</text>
</comment>
<comment type="PTM">
    <text evidence="22">Glutaminylated at Glu-45. An L-glutamine is linked to Glu-45 via the alpha amino group. This glutaminylation is yeast-specific and not essential for the normal functions of eEF1A. However, eEF1A glutaminylation slightly reduced growth under antibiotic-induced translational stress conditions.</text>
</comment>
<comment type="miscellaneous">
    <text evidence="10">Present with 827 molecules/cell in log phase SD medium.</text>
</comment>
<comment type="miscellaneous">
    <text evidence="32">There are two genes for eEF1A in yeast.</text>
</comment>
<comment type="similarity">
    <text evidence="32">Belongs to the TRAFAC class translation factor GTPase superfamily. Classic translation factor GTPase family. EF-Tu/EF-1A subfamily.</text>
</comment>
<accession>P02994</accession>
<accession>D6VQB6</accession>
<accession>Q7Z7U8</accession>
<accession>Q7Z8Q8</accession>
<accession>Q7Z8Q9</accession>
<gene>
    <name type="primary">TEF1</name>
    <name type="ordered locus">YPR080W</name>
    <name type="ORF">P9513.7</name>
</gene>
<gene>
    <name type="primary">TEF2</name>
    <name type="ordered locus">YBR118W</name>
    <name type="ORF">YBR0913</name>
</gene>
<protein>
    <recommendedName>
        <fullName>Elongation factor 1-alpha</fullName>
        <shortName>EF-1-alpha</shortName>
    </recommendedName>
    <alternativeName>
        <fullName>Eukaryotic elongation factor 1A</fullName>
        <shortName>eEF1A</shortName>
    </alternativeName>
    <alternativeName>
        <fullName>Translation elongation factor 1A</fullName>
    </alternativeName>
</protein>
<organism>
    <name type="scientific">Saccharomyces cerevisiae (strain ATCC 204508 / S288c)</name>
    <name type="common">Baker's yeast</name>
    <dbReference type="NCBI Taxonomy" id="559292"/>
    <lineage>
        <taxon>Eukaryota</taxon>
        <taxon>Fungi</taxon>
        <taxon>Dikarya</taxon>
        <taxon>Ascomycota</taxon>
        <taxon>Saccharomycotina</taxon>
        <taxon>Saccharomycetes</taxon>
        <taxon>Saccharomycetales</taxon>
        <taxon>Saccharomycetaceae</taxon>
        <taxon>Saccharomyces</taxon>
    </lineage>
</organism>
<dbReference type="EMBL" id="X00779">
    <property type="protein sequence ID" value="CAA25356.1"/>
    <property type="molecule type" value="Genomic_DNA"/>
</dbReference>
<dbReference type="EMBL" id="X01638">
    <property type="protein sequence ID" value="CAA25798.1"/>
    <property type="molecule type" value="Genomic_DNA"/>
</dbReference>
<dbReference type="EMBL" id="M10992">
    <property type="protein sequence ID" value="AAA34585.1"/>
    <property type="molecule type" value="Genomic_DNA"/>
</dbReference>
<dbReference type="EMBL" id="M15666">
    <property type="protein sequence ID" value="AAA34584.1"/>
    <property type="molecule type" value="Genomic_DNA"/>
</dbReference>
<dbReference type="EMBL" id="M15667">
    <property type="protein sequence ID" value="AAA34586.1"/>
    <property type="molecule type" value="Genomic_DNA"/>
</dbReference>
<dbReference type="EMBL" id="X78993">
    <property type="protein sequence ID" value="CAA55620.1"/>
    <property type="molecule type" value="Genomic_DNA"/>
</dbReference>
<dbReference type="EMBL" id="Z35987">
    <property type="protein sequence ID" value="CAA85075.1"/>
    <property type="molecule type" value="Genomic_DNA"/>
</dbReference>
<dbReference type="EMBL" id="U51033">
    <property type="protein sequence ID" value="AAB68129.1"/>
    <property type="molecule type" value="Genomic_DNA"/>
</dbReference>
<dbReference type="EMBL" id="AY692927">
    <property type="protein sequence ID" value="AAT92946.1"/>
    <property type="molecule type" value="Genomic_DNA"/>
</dbReference>
<dbReference type="EMBL" id="X73532">
    <property type="protein sequence ID" value="CAA51936.1"/>
    <property type="molecule type" value="Genomic_DNA"/>
</dbReference>
<dbReference type="EMBL" id="AF402004">
    <property type="protein sequence ID" value="AAP86465.1"/>
    <property type="molecule type" value="Genomic_DNA"/>
</dbReference>
<dbReference type="EMBL" id="AY130810">
    <property type="protein sequence ID" value="AAM83111.1"/>
    <property type="molecule type" value="Genomic_DNA"/>
</dbReference>
<dbReference type="EMBL" id="AY130811">
    <property type="protein sequence ID" value="AAM83112.1"/>
    <property type="molecule type" value="Genomic_DNA"/>
</dbReference>
<dbReference type="EMBL" id="AY130812">
    <property type="protein sequence ID" value="AAM83113.1"/>
    <property type="molecule type" value="Genomic_DNA"/>
</dbReference>
<dbReference type="EMBL" id="AY130813">
    <property type="protein sequence ID" value="AAM83114.1"/>
    <property type="molecule type" value="Genomic_DNA"/>
</dbReference>
<dbReference type="EMBL" id="BK006936">
    <property type="protein sequence ID" value="DAA07236.1"/>
    <property type="molecule type" value="Genomic_DNA"/>
</dbReference>
<dbReference type="EMBL" id="BK006949">
    <property type="protein sequence ID" value="DAA11498.1"/>
    <property type="molecule type" value="Genomic_DNA"/>
</dbReference>
<dbReference type="PIR" id="A03522">
    <property type="entry name" value="EFBY1A"/>
</dbReference>
<dbReference type="RefSeq" id="NP_009676.1">
    <property type="nucleotide sequence ID" value="NM_001178466.1"/>
</dbReference>
<dbReference type="RefSeq" id="NP_015405.1">
    <property type="nucleotide sequence ID" value="NM_001184177.1"/>
</dbReference>
<dbReference type="PDB" id="1F60">
    <property type="method" value="X-ray"/>
    <property type="resolution" value="1.67 A"/>
    <property type="chains" value="A=1-458"/>
</dbReference>
<dbReference type="PDB" id="1G7C">
    <property type="method" value="X-ray"/>
    <property type="resolution" value="2.05 A"/>
    <property type="chains" value="A=1-458"/>
</dbReference>
<dbReference type="PDB" id="1IJE">
    <property type="method" value="X-ray"/>
    <property type="resolution" value="2.40 A"/>
    <property type="chains" value="A=1-458"/>
</dbReference>
<dbReference type="PDB" id="1IJF">
    <property type="method" value="X-ray"/>
    <property type="resolution" value="3.00 A"/>
    <property type="chains" value="A=1-458"/>
</dbReference>
<dbReference type="PDB" id="2B7B">
    <property type="method" value="X-ray"/>
    <property type="resolution" value="2.60 A"/>
    <property type="chains" value="A=1-458"/>
</dbReference>
<dbReference type="PDB" id="2B7C">
    <property type="method" value="X-ray"/>
    <property type="resolution" value="1.80 A"/>
    <property type="chains" value="A=1-458"/>
</dbReference>
<dbReference type="PDB" id="5O8W">
    <property type="method" value="X-ray"/>
    <property type="resolution" value="1.67 A"/>
    <property type="chains" value="A=1-458"/>
</dbReference>
<dbReference type="PDB" id="9BDP">
    <property type="method" value="EM"/>
    <property type="resolution" value="3.70 A"/>
    <property type="chains" value="EF1A=1-458"/>
</dbReference>
<dbReference type="PDBsum" id="1F60"/>
<dbReference type="PDBsum" id="1G7C"/>
<dbReference type="PDBsum" id="1IJE"/>
<dbReference type="PDBsum" id="1IJF"/>
<dbReference type="PDBsum" id="2B7B"/>
<dbReference type="PDBsum" id="2B7C"/>
<dbReference type="PDBsum" id="5O8W"/>
<dbReference type="PDBsum" id="9BDP"/>
<dbReference type="EMDB" id="EMD-44464"/>
<dbReference type="SMR" id="P02994"/>
<dbReference type="BioGRID" id="32820">
    <property type="interactions" value="379"/>
</dbReference>
<dbReference type="BioGRID" id="36251">
    <property type="interactions" value="282"/>
</dbReference>
<dbReference type="ComplexPortal" id="CPX-2854">
    <property type="entry name" value="Elongation Factor eEF1 complex, variant CAM1"/>
</dbReference>
<dbReference type="ComplexPortal" id="CPX-425">
    <property type="entry name" value="Elongation Factor eEF1 complex, variant TEF4"/>
</dbReference>
<dbReference type="DIP" id="DIP-2250N"/>
<dbReference type="FunCoup" id="P02994">
    <property type="interactions" value="2402"/>
</dbReference>
<dbReference type="IntAct" id="P02994">
    <property type="interactions" value="819"/>
</dbReference>
<dbReference type="MINT" id="P02994"/>
<dbReference type="STRING" id="4932.YBR118W"/>
<dbReference type="CarbonylDB" id="P02994"/>
<dbReference type="iPTMnet" id="P02994"/>
<dbReference type="PaxDb" id="4932-YBR118W"/>
<dbReference type="PeptideAtlas" id="P02994"/>
<dbReference type="TopDownProteomics" id="P02994"/>
<dbReference type="EnsemblFungi" id="YBR118W_mRNA">
    <property type="protein sequence ID" value="YBR118W"/>
    <property type="gene ID" value="YBR118W"/>
</dbReference>
<dbReference type="EnsemblFungi" id="YPR080W_mRNA">
    <property type="protein sequence ID" value="YPR080W"/>
    <property type="gene ID" value="YPR080W"/>
</dbReference>
<dbReference type="GeneID" id="852415"/>
<dbReference type="GeneID" id="856195"/>
<dbReference type="KEGG" id="sce:YBR118W"/>
<dbReference type="KEGG" id="sce:YPR080W"/>
<dbReference type="AGR" id="SGD:S000000322"/>
<dbReference type="AGR" id="SGD:S000006284"/>
<dbReference type="SGD" id="S000006284">
    <property type="gene designation" value="TEF1"/>
</dbReference>
<dbReference type="SGD" id="S000000322">
    <property type="gene designation" value="TEF2"/>
</dbReference>
<dbReference type="VEuPathDB" id="FungiDB:YBR118W"/>
<dbReference type="VEuPathDB" id="FungiDB:YPR080W"/>
<dbReference type="eggNOG" id="KOG0052">
    <property type="taxonomic scope" value="Eukaryota"/>
</dbReference>
<dbReference type="GeneTree" id="ENSGT00940000164334"/>
<dbReference type="HOGENOM" id="CLU_007265_3_5_1"/>
<dbReference type="InParanoid" id="P02994"/>
<dbReference type="OMA" id="AIRDMGM"/>
<dbReference type="OrthoDB" id="3969558at2759"/>
<dbReference type="BioCyc" id="YEAST:G3O-34224-MONOMER"/>
<dbReference type="Reactome" id="R-SCE-156842">
    <property type="pathway name" value="Eukaryotic Translation Elongation"/>
</dbReference>
<dbReference type="Reactome" id="R-SCE-3371511">
    <property type="pathway name" value="HSF1 activation"/>
</dbReference>
<dbReference type="Reactome" id="R-SCE-6798695">
    <property type="pathway name" value="Neutrophil degranulation"/>
</dbReference>
<dbReference type="Reactome" id="R-SCE-8876725">
    <property type="pathway name" value="Protein methylation"/>
</dbReference>
<dbReference type="SABIO-RK" id="P02994"/>
<dbReference type="UniPathway" id="UPA00345"/>
<dbReference type="EvolutionaryTrace" id="P02994"/>
<dbReference type="PRO" id="PR:P02994"/>
<dbReference type="Proteomes" id="UP000002311">
    <property type="component" value="Chromosome II"/>
</dbReference>
<dbReference type="Proteomes" id="UP000002311">
    <property type="component" value="Chromosome XVI"/>
</dbReference>
<dbReference type="RNAct" id="P02994">
    <property type="molecule type" value="protein"/>
</dbReference>
<dbReference type="GO" id="GO:0005737">
    <property type="term" value="C:cytoplasm"/>
    <property type="evidence" value="ECO:0000314"/>
    <property type="project" value="SGD"/>
</dbReference>
<dbReference type="GO" id="GO:0005856">
    <property type="term" value="C:cytoskeleton"/>
    <property type="evidence" value="ECO:0007669"/>
    <property type="project" value="UniProtKB-SubCell"/>
</dbReference>
<dbReference type="GO" id="GO:0005829">
    <property type="term" value="C:cytosol"/>
    <property type="evidence" value="ECO:0007005"/>
    <property type="project" value="SGD"/>
</dbReference>
<dbReference type="GO" id="GO:0005853">
    <property type="term" value="C:eukaryotic translation elongation factor 1 complex"/>
    <property type="evidence" value="ECO:0000303"/>
    <property type="project" value="ComplexPortal"/>
</dbReference>
<dbReference type="GO" id="GO:0000329">
    <property type="term" value="C:fungal-type vacuole membrane"/>
    <property type="evidence" value="ECO:0000314"/>
    <property type="project" value="SGD"/>
</dbReference>
<dbReference type="GO" id="GO:0005739">
    <property type="term" value="C:mitochondrion"/>
    <property type="evidence" value="ECO:0000353"/>
    <property type="project" value="SGD"/>
</dbReference>
<dbReference type="GO" id="GO:0005840">
    <property type="term" value="C:ribosome"/>
    <property type="evidence" value="ECO:0000314"/>
    <property type="project" value="ComplexPortal"/>
</dbReference>
<dbReference type="GO" id="GO:0051015">
    <property type="term" value="F:actin filament binding"/>
    <property type="evidence" value="ECO:0000314"/>
    <property type="project" value="SGD"/>
</dbReference>
<dbReference type="GO" id="GO:0019003">
    <property type="term" value="F:GDP binding"/>
    <property type="evidence" value="ECO:0000314"/>
    <property type="project" value="SGD"/>
</dbReference>
<dbReference type="GO" id="GO:0005525">
    <property type="term" value="F:GTP binding"/>
    <property type="evidence" value="ECO:0000314"/>
    <property type="project" value="SGD"/>
</dbReference>
<dbReference type="GO" id="GO:0003924">
    <property type="term" value="F:GTPase activity"/>
    <property type="evidence" value="ECO:0000318"/>
    <property type="project" value="GO_Central"/>
</dbReference>
<dbReference type="GO" id="GO:1904408">
    <property type="term" value="F:melatonin binding"/>
    <property type="evidence" value="ECO:0000314"/>
    <property type="project" value="SGD"/>
</dbReference>
<dbReference type="GO" id="GO:0019901">
    <property type="term" value="F:protein kinase binding"/>
    <property type="evidence" value="ECO:0000353"/>
    <property type="project" value="UniProtKB"/>
</dbReference>
<dbReference type="GO" id="GO:0043022">
    <property type="term" value="F:ribosome binding"/>
    <property type="evidence" value="ECO:0000314"/>
    <property type="project" value="UniProtKB"/>
</dbReference>
<dbReference type="GO" id="GO:0003746">
    <property type="term" value="F:translation elongation factor activity"/>
    <property type="evidence" value="ECO:0000315"/>
    <property type="project" value="SGD"/>
</dbReference>
<dbReference type="GO" id="GO:0051017">
    <property type="term" value="P:actin filament bundle assembly"/>
    <property type="evidence" value="ECO:0000314"/>
    <property type="project" value="SGD"/>
</dbReference>
<dbReference type="GO" id="GO:0034198">
    <property type="term" value="P:cellular response to amino acid starvation"/>
    <property type="evidence" value="ECO:0000314"/>
    <property type="project" value="UniProtKB"/>
</dbReference>
<dbReference type="GO" id="GO:0006469">
    <property type="term" value="P:negative regulation of protein kinase activity"/>
    <property type="evidence" value="ECO:0000314"/>
    <property type="project" value="UniProtKB"/>
</dbReference>
<dbReference type="GO" id="GO:0001933">
    <property type="term" value="P:negative regulation of protein phosphorylation"/>
    <property type="evidence" value="ECO:0000314"/>
    <property type="project" value="UniProtKB"/>
</dbReference>
<dbReference type="GO" id="GO:0006417">
    <property type="term" value="P:regulation of translation"/>
    <property type="evidence" value="ECO:0007669"/>
    <property type="project" value="UniProtKB-ARBA"/>
</dbReference>
<dbReference type="GO" id="GO:0006412">
    <property type="term" value="P:translation"/>
    <property type="evidence" value="ECO:0000318"/>
    <property type="project" value="GO_Central"/>
</dbReference>
<dbReference type="GO" id="GO:0006414">
    <property type="term" value="P:translational elongation"/>
    <property type="evidence" value="ECO:0000314"/>
    <property type="project" value="ComplexPortal"/>
</dbReference>
<dbReference type="GO" id="GO:0006409">
    <property type="term" value="P:tRNA export from nucleus"/>
    <property type="evidence" value="ECO:0000315"/>
    <property type="project" value="SGD"/>
</dbReference>
<dbReference type="CDD" id="cd01883">
    <property type="entry name" value="EF1_alpha"/>
    <property type="match status" value="1"/>
</dbReference>
<dbReference type="CDD" id="cd03693">
    <property type="entry name" value="EF1_alpha_II"/>
    <property type="match status" value="1"/>
</dbReference>
<dbReference type="CDD" id="cd03705">
    <property type="entry name" value="EF1_alpha_III"/>
    <property type="match status" value="1"/>
</dbReference>
<dbReference type="FunFam" id="2.40.30.10:FF:000003">
    <property type="entry name" value="Elongation factor 1-alpha"/>
    <property type="match status" value="1"/>
</dbReference>
<dbReference type="FunFam" id="2.40.30.10:FF:000005">
    <property type="entry name" value="Elongation factor 1-alpha"/>
    <property type="match status" value="1"/>
</dbReference>
<dbReference type="FunFam" id="3.40.50.300:FF:000211">
    <property type="entry name" value="Elongation factor 1-alpha"/>
    <property type="match status" value="1"/>
</dbReference>
<dbReference type="Gene3D" id="3.40.50.300">
    <property type="entry name" value="P-loop containing nucleotide triphosphate hydrolases"/>
    <property type="match status" value="1"/>
</dbReference>
<dbReference type="Gene3D" id="2.40.30.10">
    <property type="entry name" value="Translation factors"/>
    <property type="match status" value="2"/>
</dbReference>
<dbReference type="HAMAP" id="MF_00118_A">
    <property type="entry name" value="EF_Tu_A"/>
    <property type="match status" value="1"/>
</dbReference>
<dbReference type="InterPro" id="IPR004161">
    <property type="entry name" value="EFTu-like_2"/>
</dbReference>
<dbReference type="InterPro" id="IPR031157">
    <property type="entry name" value="G_TR_CS"/>
</dbReference>
<dbReference type="InterPro" id="IPR054696">
    <property type="entry name" value="GTP-eEF1A_C"/>
</dbReference>
<dbReference type="InterPro" id="IPR027417">
    <property type="entry name" value="P-loop_NTPase"/>
</dbReference>
<dbReference type="InterPro" id="IPR000795">
    <property type="entry name" value="T_Tr_GTP-bd_dom"/>
</dbReference>
<dbReference type="InterPro" id="IPR050100">
    <property type="entry name" value="TRAFAC_GTPase_members"/>
</dbReference>
<dbReference type="InterPro" id="IPR009000">
    <property type="entry name" value="Transl_B-barrel_sf"/>
</dbReference>
<dbReference type="InterPro" id="IPR009001">
    <property type="entry name" value="Transl_elong_EF1A/Init_IF2_C"/>
</dbReference>
<dbReference type="InterPro" id="IPR004539">
    <property type="entry name" value="Transl_elong_EF1A_euk/arc"/>
</dbReference>
<dbReference type="NCBIfam" id="TIGR00483">
    <property type="entry name" value="EF-1_alpha"/>
    <property type="match status" value="1"/>
</dbReference>
<dbReference type="NCBIfam" id="NF008969">
    <property type="entry name" value="PRK12317.1"/>
    <property type="match status" value="1"/>
</dbReference>
<dbReference type="PANTHER" id="PTHR23115">
    <property type="entry name" value="TRANSLATION FACTOR"/>
    <property type="match status" value="1"/>
</dbReference>
<dbReference type="Pfam" id="PF22594">
    <property type="entry name" value="GTP-eEF1A_C"/>
    <property type="match status" value="1"/>
</dbReference>
<dbReference type="Pfam" id="PF00009">
    <property type="entry name" value="GTP_EFTU"/>
    <property type="match status" value="1"/>
</dbReference>
<dbReference type="Pfam" id="PF03144">
    <property type="entry name" value="GTP_EFTU_D2"/>
    <property type="match status" value="1"/>
</dbReference>
<dbReference type="PRINTS" id="PR00315">
    <property type="entry name" value="ELONGATNFCT"/>
</dbReference>
<dbReference type="SUPFAM" id="SSF50465">
    <property type="entry name" value="EF-Tu/eEF-1alpha/eIF2-gamma C-terminal domain"/>
    <property type="match status" value="1"/>
</dbReference>
<dbReference type="SUPFAM" id="SSF52540">
    <property type="entry name" value="P-loop containing nucleoside triphosphate hydrolases"/>
    <property type="match status" value="1"/>
</dbReference>
<dbReference type="SUPFAM" id="SSF50447">
    <property type="entry name" value="Translation proteins"/>
    <property type="match status" value="1"/>
</dbReference>
<dbReference type="PROSITE" id="PS00301">
    <property type="entry name" value="G_TR_1"/>
    <property type="match status" value="1"/>
</dbReference>
<dbReference type="PROSITE" id="PS51722">
    <property type="entry name" value="G_TR_2"/>
    <property type="match status" value="1"/>
</dbReference>
<sequence>MGKEKSHINVVVIGHVDSGKSTTTGHLIYKCGGIDKRTIEKFEKEAAELGKGSFKYAWVLDKLKAERERGITIDIALWKFETPKYQVTVIDAPGHRDFIKNMITGTSQADCAILIIAGGVGEFEAGISKDGQTREHALLAFTLGVRQLIVAVNKMDSVKWDESRFQEIVKETSNFIKKVGYNPKTVPFVPISGWNGDNMIEATTNAPWYKGWEKETKAGVVKGKTLLEAIDAIEQPSRPTDKPLRLPLQDVYKIGGIGTVPVGRVETGVIKPGMVVTFAPAGVTTEVKSVEMHHEQLEQGVPGDNVGFNVKNVSVKEIRRGNVCGDAKNDPPKGCASFNATVIVLNHPGQISAGYSPVLDCHTAHIACRFDELLEKNDRRSGKKLEDHPKFLKSGDAALVKFVPSKPMCVEAFSEYPPLGRFAVRDMRQTVAVGVIKSVDKTEKAAKVTKAAQKAAKK</sequence>